<comment type="function">
    <text evidence="2">The synthetic peptide inhibits growth of fungus P.capsici and partially that of V.dahliae, F.graminearum and F.omysporum.</text>
</comment>
<comment type="subcellular location">
    <subcellularLocation>
        <location evidence="2">Secreted</location>
    </subcellularLocation>
</comment>
<dbReference type="GO" id="GO:0005576">
    <property type="term" value="C:extracellular region"/>
    <property type="evidence" value="ECO:0000314"/>
    <property type="project" value="UniProtKB"/>
</dbReference>
<dbReference type="GO" id="GO:0050832">
    <property type="term" value="P:defense response to fungus"/>
    <property type="evidence" value="ECO:0000314"/>
    <property type="project" value="UniProtKB"/>
</dbReference>
<dbReference type="GO" id="GO:0050829">
    <property type="term" value="P:defense response to Gram-negative bacterium"/>
    <property type="evidence" value="ECO:0000314"/>
    <property type="project" value="UniProtKB"/>
</dbReference>
<dbReference type="GO" id="GO:0050830">
    <property type="term" value="P:defense response to Gram-positive bacterium"/>
    <property type="evidence" value="ECO:0000314"/>
    <property type="project" value="UniProtKB"/>
</dbReference>
<dbReference type="GO" id="GO:0031640">
    <property type="term" value="P:killing of cells of another organism"/>
    <property type="evidence" value="ECO:0007669"/>
    <property type="project" value="UniProtKB-KW"/>
</dbReference>
<organism>
    <name type="scientific">Xenorhabdus budapestensis</name>
    <dbReference type="NCBI Taxonomy" id="290110"/>
    <lineage>
        <taxon>Bacteria</taxon>
        <taxon>Pseudomonadati</taxon>
        <taxon>Pseudomonadota</taxon>
        <taxon>Gammaproteobacteria</taxon>
        <taxon>Enterobacterales</taxon>
        <taxon>Morganellaceae</taxon>
        <taxon>Xenorhabdus</taxon>
    </lineage>
</organism>
<evidence type="ECO:0000256" key="1">
    <source>
        <dbReference type="SAM" id="MobiDB-lite"/>
    </source>
</evidence>
<evidence type="ECO:0000269" key="2">
    <source>
    </source>
</evidence>
<evidence type="ECO:0000303" key="3">
    <source>
    </source>
</evidence>
<evidence type="ECO:0000305" key="4"/>
<sequence length="20" mass="1788">EGPVGLADPDGPASAPLGAP</sequence>
<keyword id="KW-0929">Antimicrobial</keyword>
<keyword id="KW-0903">Direct protein sequencing</keyword>
<keyword id="KW-0295">Fungicide</keyword>
<keyword id="KW-0964">Secreted</keyword>
<reference evidence="4" key="1">
    <citation type="journal article" date="2012" name="Peptides">
        <title>Two novel antimicrobial peptides purified from the symbiotic bacteria Xenorhabdus budapestensis NMC-10.</title>
        <authorList>
            <person name="Xiao Y."/>
            <person name="Meng F."/>
            <person name="Qiu D."/>
            <person name="Yang X."/>
        </authorList>
    </citation>
    <scope>PROTEIN SEQUENCE</scope>
    <scope>FUNCTION</scope>
    <scope>SUBCELLULAR LOCATION</scope>
    <source>
        <strain evidence="2">NMC-10</strain>
    </source>
</reference>
<accession>B3A0L3</accession>
<name>AMP20_XENBU</name>
<feature type="peptide" id="PRO_0000419964" description="Antimicrobial peptide EP-20" evidence="2">
    <location>
        <begin position="1"/>
        <end position="20"/>
    </location>
</feature>
<feature type="region of interest" description="Disordered" evidence="1">
    <location>
        <begin position="1"/>
        <end position="20"/>
    </location>
</feature>
<proteinExistence type="evidence at protein level"/>
<protein>
    <recommendedName>
        <fullName evidence="3">Antimicrobial peptide EP-20</fullName>
    </recommendedName>
</protein>